<protein>
    <recommendedName>
        <fullName>HTH-type transcriptional regulator Cphy_2742</fullName>
    </recommendedName>
</protein>
<name>PECTR_LACP7</name>
<sequence>MNIYDVSQKAGVSIATVSRVINGNPNVSEKTKQKVLDVMKEIGYTPNVFARGLGLNTMKTIGIMCSDSSDTFLANAVYHLEQNLRKNGYDSFLCCTGYELHTKQKYLKLLLSKRVDAIVMVGSSFLEANKKDNAYIMEAADEVPIMLINGYLSHPRIYCTLCDDHQAVYDAVSKLITQGRKEILYLYNSKSYSGLQKLSGYKAALAAHELPLDENLMQMCPNNLADTKNLLNSLVKQGLNYDAVVTAEDLLAIGTIKFIKDSGRQIPQDVSIIGYNNSLLTTCCDPELTSIDNHVETLCISTISTLMRVLNGNDVPNKTTISNDLIVRKTTNF</sequence>
<dbReference type="EMBL" id="CP000885">
    <property type="protein sequence ID" value="ABX43103.1"/>
    <property type="molecule type" value="Genomic_DNA"/>
</dbReference>
<dbReference type="RefSeq" id="WP_012200754.1">
    <property type="nucleotide sequence ID" value="NC_010001.1"/>
</dbReference>
<dbReference type="SMR" id="A9KNI6"/>
<dbReference type="STRING" id="357809.Cphy_2742"/>
<dbReference type="KEGG" id="cpy:Cphy_2742"/>
<dbReference type="eggNOG" id="COG1609">
    <property type="taxonomic scope" value="Bacteria"/>
</dbReference>
<dbReference type="HOGENOM" id="CLU_037628_6_0_9"/>
<dbReference type="OrthoDB" id="9784962at2"/>
<dbReference type="Proteomes" id="UP000000370">
    <property type="component" value="Chromosome"/>
</dbReference>
<dbReference type="GO" id="GO:0005737">
    <property type="term" value="C:cytoplasm"/>
    <property type="evidence" value="ECO:0007669"/>
    <property type="project" value="UniProtKB-SubCell"/>
</dbReference>
<dbReference type="GO" id="GO:0003700">
    <property type="term" value="F:DNA-binding transcription factor activity"/>
    <property type="evidence" value="ECO:0007669"/>
    <property type="project" value="TreeGrafter"/>
</dbReference>
<dbReference type="GO" id="GO:0000976">
    <property type="term" value="F:transcription cis-regulatory region binding"/>
    <property type="evidence" value="ECO:0007669"/>
    <property type="project" value="TreeGrafter"/>
</dbReference>
<dbReference type="CDD" id="cd01392">
    <property type="entry name" value="HTH_LacI"/>
    <property type="match status" value="1"/>
</dbReference>
<dbReference type="CDD" id="cd06267">
    <property type="entry name" value="PBP1_LacI_sugar_binding-like"/>
    <property type="match status" value="1"/>
</dbReference>
<dbReference type="Gene3D" id="3.40.50.2300">
    <property type="match status" value="2"/>
</dbReference>
<dbReference type="Gene3D" id="1.10.260.40">
    <property type="entry name" value="lambda repressor-like DNA-binding domains"/>
    <property type="match status" value="1"/>
</dbReference>
<dbReference type="InterPro" id="IPR000843">
    <property type="entry name" value="HTH_LacI"/>
</dbReference>
<dbReference type="InterPro" id="IPR010982">
    <property type="entry name" value="Lambda_DNA-bd_dom_sf"/>
</dbReference>
<dbReference type="InterPro" id="IPR001761">
    <property type="entry name" value="Peripla_BP/Lac1_sug-bd_dom"/>
</dbReference>
<dbReference type="InterPro" id="IPR028082">
    <property type="entry name" value="Peripla_BP_I"/>
</dbReference>
<dbReference type="PANTHER" id="PTHR30146:SF109">
    <property type="entry name" value="HTH-TYPE TRANSCRIPTIONAL REGULATOR GALS"/>
    <property type="match status" value="1"/>
</dbReference>
<dbReference type="PANTHER" id="PTHR30146">
    <property type="entry name" value="LACI-RELATED TRANSCRIPTIONAL REPRESSOR"/>
    <property type="match status" value="1"/>
</dbReference>
<dbReference type="Pfam" id="PF00356">
    <property type="entry name" value="LacI"/>
    <property type="match status" value="1"/>
</dbReference>
<dbReference type="Pfam" id="PF00532">
    <property type="entry name" value="Peripla_BP_1"/>
    <property type="match status" value="1"/>
</dbReference>
<dbReference type="PRINTS" id="PR00036">
    <property type="entry name" value="HTHLACI"/>
</dbReference>
<dbReference type="SMART" id="SM00354">
    <property type="entry name" value="HTH_LACI"/>
    <property type="match status" value="1"/>
</dbReference>
<dbReference type="SUPFAM" id="SSF47413">
    <property type="entry name" value="lambda repressor-like DNA-binding domains"/>
    <property type="match status" value="1"/>
</dbReference>
<dbReference type="SUPFAM" id="SSF53822">
    <property type="entry name" value="Periplasmic binding protein-like I"/>
    <property type="match status" value="1"/>
</dbReference>
<dbReference type="PROSITE" id="PS50932">
    <property type="entry name" value="HTH_LACI_2"/>
    <property type="match status" value="1"/>
</dbReference>
<comment type="function">
    <text evidence="2">Involved in control of pectin and galacturonic acid metabolism. Probably represses a comprehensive set of pectin fermentation genes by binding a conserved palindrome at or downstream of their transcription start site to block transcription. In the presence of galacturonic acid may activate transcription of acetate synthesis and other aspects of carbon metabolism.</text>
</comment>
<comment type="subcellular location">
    <subcellularLocation>
        <location evidence="3">Cytoplasm</location>
    </subcellularLocation>
</comment>
<comment type="induction">
    <text evidence="2">Up-regulated on galacturonic acid.</text>
</comment>
<gene>
    <name evidence="4" type="ordered locus">Cphy_2742</name>
</gene>
<accession>A9KNI6</accession>
<keyword id="KW-0963">Cytoplasm</keyword>
<keyword id="KW-0238">DNA-binding</keyword>
<keyword id="KW-1185">Reference proteome</keyword>
<keyword id="KW-0804">Transcription</keyword>
<keyword id="KW-0805">Transcription regulation</keyword>
<proteinExistence type="evidence at transcript level"/>
<reference key="1">
    <citation type="submission" date="2007-11" db="EMBL/GenBank/DDBJ databases">
        <title>Complete genome sequence of Clostridium phytofermentans ISDg.</title>
        <authorList>
            <person name="Leschine S.B."/>
            <person name="Warnick T.A."/>
            <person name="Blanchard J.L."/>
            <person name="Schnell D.J."/>
            <person name="Petit E.L."/>
            <person name="LaTouf W.G."/>
            <person name="Copeland A."/>
            <person name="Lucas S."/>
            <person name="Lapidus A."/>
            <person name="Barry K."/>
            <person name="Glavina del Rio T."/>
            <person name="Dalin E."/>
            <person name="Tice H."/>
            <person name="Pitluck S."/>
            <person name="Kiss H."/>
            <person name="Brettin T."/>
            <person name="Bruce D."/>
            <person name="Detter J.C."/>
            <person name="Han C."/>
            <person name="Kuske C."/>
            <person name="Schmutz J."/>
            <person name="Larimer F."/>
            <person name="Land M."/>
            <person name="Hauser L."/>
            <person name="Kyrpides N."/>
            <person name="Kim E.A."/>
            <person name="Richardson P."/>
        </authorList>
    </citation>
    <scope>NUCLEOTIDE SEQUENCE [LARGE SCALE GENOMIC DNA]</scope>
    <source>
        <strain>ATCC 700394 / DSM 18823 / ISDg</strain>
    </source>
</reference>
<reference key="2">
    <citation type="journal article" date="2016" name="Nat. Commun.">
        <title>Global repositioning of transcription start sites in a plant-fermenting bacterium.</title>
        <authorList>
            <person name="Boutard M."/>
            <person name="Ettwiller L."/>
            <person name="Cerisy T."/>
            <person name="Alberti A."/>
            <person name="Labadie K."/>
            <person name="Salanoubat M."/>
            <person name="Schildkraut I."/>
            <person name="Tolonen A.C."/>
        </authorList>
    </citation>
    <scope>FUNCTION</scope>
    <scope>INDUCTION</scope>
    <source>
        <strain>ATCC 700394 / DSM 18823 / ISDg</strain>
    </source>
</reference>
<evidence type="ECO:0000255" key="1">
    <source>
        <dbReference type="PROSITE-ProRule" id="PRU00111"/>
    </source>
</evidence>
<evidence type="ECO:0000269" key="2">
    <source>
    </source>
</evidence>
<evidence type="ECO:0000305" key="3"/>
<evidence type="ECO:0000312" key="4">
    <source>
        <dbReference type="EMBL" id="ABX43103.1"/>
    </source>
</evidence>
<organism>
    <name type="scientific">Lachnoclostridium phytofermentans (strain ATCC 700394 / DSM 18823 / ISDg)</name>
    <name type="common">Clostridium phytofermentans</name>
    <dbReference type="NCBI Taxonomy" id="357809"/>
    <lineage>
        <taxon>Bacteria</taxon>
        <taxon>Bacillati</taxon>
        <taxon>Bacillota</taxon>
        <taxon>Clostridia</taxon>
        <taxon>Lachnospirales</taxon>
        <taxon>Lachnospiraceae</taxon>
    </lineage>
</organism>
<feature type="chain" id="PRO_0000446250" description="HTH-type transcriptional regulator Cphy_2742">
    <location>
        <begin position="1"/>
        <end position="333"/>
    </location>
</feature>
<feature type="domain" description="HTH lacI-type" evidence="1">
    <location>
        <begin position="1"/>
        <end position="55"/>
    </location>
</feature>
<feature type="DNA-binding region" description="H-T-H motif" evidence="1">
    <location>
        <begin position="3"/>
        <end position="22"/>
    </location>
</feature>